<accession>P92485</accession>
<protein>
    <recommendedName>
        <fullName>NADH-ubiquinone oxidoreductase chain 5</fullName>
        <ecNumber evidence="1">7.1.1.2</ecNumber>
    </recommendedName>
    <alternativeName>
        <fullName>NADH dehydrogenase subunit 5</fullName>
    </alternativeName>
</protein>
<reference key="1">
    <citation type="journal article" date="1996" name="J. Mol. Evol.">
        <title>The complete mitochondrial DNA (mtDNA) of the donkey and mtDNA comparisons among four closely related mammalian species-pairs.</title>
        <authorList>
            <person name="Xu X."/>
            <person name="Gullberg A."/>
            <person name="Arnason U."/>
        </authorList>
    </citation>
    <scope>NUCLEOTIDE SEQUENCE [GENOMIC DNA]</scope>
    <source>
        <tissue>Kidney</tissue>
    </source>
</reference>
<sequence length="606" mass="68254">MNMFSSLMLASLSVLTLPIMSSILNTHKNSTYPHHVKNIISYAFITSLIPTMMFIHSGQETIISNWHWMTIQTLKLSLSFKLDYFSMIFVPVALFVTWSIMEFSLWYMHSDPYITRFFKYLLTFLITMMILVTANNLFQLFIGWEGVGIMSFLLIGWWYGRTDANTAALQAILYNRIGDIGFIMAMAWFLFNTNTWDLQQIFMLDPNLTNLPLLGLLLAATGKSAQFGLHPWLPSAMEGPTPVSALLHSSTMVVAGVFLLIRFHPLMENNKTIQSLTLCLGAITTLFTAICALTQNDIKKIIAFSTSSQLGLMIVTIGINQPYLAFLHICTHAFFKAMLFMCSGSIIHSLNDEQDIRKTGGLFNAMPFTTTSLIIGSLALTGMPFLTGFYSKDLIIETANTSYTNAWALLMTLIATSLTAVYSTRIIFFALLGQPRFLPLTTINENNPFLINSIKRLLIGSIFAGFFISNNIYPTTIPEMTMPIYMKLTALTVTILGFTLALELSLITHNLKLEHPTNMFKFSNLLGYYPTIMHRLPPLANLSMSQKSASLLLDSIWLENILPKSISQFQMKTSILISTQKGQIKLYFLSFLITLTLSMLLFNLHE</sequence>
<dbReference type="EC" id="7.1.1.2" evidence="1"/>
<dbReference type="EMBL" id="X97337">
    <property type="protein sequence ID" value="CAA66024.1"/>
    <property type="molecule type" value="Genomic_DNA"/>
</dbReference>
<dbReference type="PIR" id="T11373">
    <property type="entry name" value="T11373"/>
</dbReference>
<dbReference type="RefSeq" id="NP_007391.1">
    <property type="nucleotide sequence ID" value="NC_001788.1"/>
</dbReference>
<dbReference type="SMR" id="P92485"/>
<dbReference type="GeneID" id="808058"/>
<dbReference type="KEGG" id="eai:808058"/>
<dbReference type="CTD" id="4540"/>
<dbReference type="Proteomes" id="UP000694387">
    <property type="component" value="Mitochondrion MT"/>
</dbReference>
<dbReference type="GO" id="GO:0005743">
    <property type="term" value="C:mitochondrial inner membrane"/>
    <property type="evidence" value="ECO:0000250"/>
    <property type="project" value="UniProtKB"/>
</dbReference>
<dbReference type="GO" id="GO:0008137">
    <property type="term" value="F:NADH dehydrogenase (ubiquinone) activity"/>
    <property type="evidence" value="ECO:0000250"/>
    <property type="project" value="UniProtKB"/>
</dbReference>
<dbReference type="GO" id="GO:0015990">
    <property type="term" value="P:electron transport coupled proton transport"/>
    <property type="evidence" value="ECO:0007669"/>
    <property type="project" value="TreeGrafter"/>
</dbReference>
<dbReference type="GO" id="GO:0006120">
    <property type="term" value="P:mitochondrial electron transport, NADH to ubiquinone"/>
    <property type="evidence" value="ECO:0000250"/>
    <property type="project" value="UniProtKB"/>
</dbReference>
<dbReference type="GO" id="GO:0032981">
    <property type="term" value="P:mitochondrial respiratory chain complex I assembly"/>
    <property type="evidence" value="ECO:0000250"/>
    <property type="project" value="UniProtKB"/>
</dbReference>
<dbReference type="InterPro" id="IPR010934">
    <property type="entry name" value="NADH_DH_su5_C"/>
</dbReference>
<dbReference type="InterPro" id="IPR018393">
    <property type="entry name" value="NADHpl_OxRdtase_5_subgr"/>
</dbReference>
<dbReference type="InterPro" id="IPR001750">
    <property type="entry name" value="ND/Mrp_TM"/>
</dbReference>
<dbReference type="InterPro" id="IPR003945">
    <property type="entry name" value="NU5C-like"/>
</dbReference>
<dbReference type="InterPro" id="IPR001516">
    <property type="entry name" value="Proton_antipo_N"/>
</dbReference>
<dbReference type="NCBIfam" id="TIGR01974">
    <property type="entry name" value="NDH_I_L"/>
    <property type="match status" value="1"/>
</dbReference>
<dbReference type="PANTHER" id="PTHR42829">
    <property type="entry name" value="NADH-UBIQUINONE OXIDOREDUCTASE CHAIN 5"/>
    <property type="match status" value="1"/>
</dbReference>
<dbReference type="PANTHER" id="PTHR42829:SF2">
    <property type="entry name" value="NADH-UBIQUINONE OXIDOREDUCTASE CHAIN 5"/>
    <property type="match status" value="1"/>
</dbReference>
<dbReference type="Pfam" id="PF06455">
    <property type="entry name" value="NADH5_C"/>
    <property type="match status" value="1"/>
</dbReference>
<dbReference type="Pfam" id="PF00361">
    <property type="entry name" value="Proton_antipo_M"/>
    <property type="match status" value="1"/>
</dbReference>
<dbReference type="Pfam" id="PF00662">
    <property type="entry name" value="Proton_antipo_N"/>
    <property type="match status" value="1"/>
</dbReference>
<dbReference type="PRINTS" id="PR01434">
    <property type="entry name" value="NADHDHGNASE5"/>
</dbReference>
<gene>
    <name type="primary">MT-ND5</name>
    <name type="synonym">MTND5</name>
    <name type="synonym">NADH5</name>
    <name type="synonym">ND5</name>
</gene>
<evidence type="ECO:0000250" key="1">
    <source>
        <dbReference type="UniProtKB" id="P03915"/>
    </source>
</evidence>
<evidence type="ECO:0000250" key="2">
    <source>
        <dbReference type="UniProtKB" id="P03920"/>
    </source>
</evidence>
<evidence type="ECO:0000255" key="3"/>
<evidence type="ECO:0000305" key="4"/>
<name>NU5M_EQUAS</name>
<feature type="chain" id="PRO_0000118094" description="NADH-ubiquinone oxidoreductase chain 5">
    <location>
        <begin position="1"/>
        <end position="606"/>
    </location>
</feature>
<feature type="transmembrane region" description="Helical" evidence="3">
    <location>
        <begin position="4"/>
        <end position="24"/>
    </location>
</feature>
<feature type="transmembrane region" description="Helical" evidence="3">
    <location>
        <begin position="38"/>
        <end position="58"/>
    </location>
</feature>
<feature type="transmembrane region" description="Helical" evidence="3">
    <location>
        <begin position="87"/>
        <end position="107"/>
    </location>
</feature>
<feature type="transmembrane region" description="Helical" evidence="3">
    <location>
        <begin position="117"/>
        <end position="137"/>
    </location>
</feature>
<feature type="transmembrane region" description="Helical" evidence="3">
    <location>
        <begin position="140"/>
        <end position="160"/>
    </location>
</feature>
<feature type="transmembrane region" description="Helical" evidence="3">
    <location>
        <begin position="171"/>
        <end position="191"/>
    </location>
</feature>
<feature type="transmembrane region" description="Helical" evidence="3">
    <location>
        <begin position="211"/>
        <end position="233"/>
    </location>
</feature>
<feature type="transmembrane region" description="Helical" evidence="3">
    <location>
        <begin position="241"/>
        <end position="261"/>
    </location>
</feature>
<feature type="transmembrane region" description="Helical" evidence="3">
    <location>
        <begin position="273"/>
        <end position="293"/>
    </location>
</feature>
<feature type="transmembrane region" description="Helical" evidence="3">
    <location>
        <begin position="301"/>
        <end position="320"/>
    </location>
</feature>
<feature type="transmembrane region" description="Helical" evidence="3">
    <location>
        <begin position="325"/>
        <end position="347"/>
    </location>
</feature>
<feature type="transmembrane region" description="Helical" evidence="3">
    <location>
        <begin position="366"/>
        <end position="386"/>
    </location>
</feature>
<feature type="transmembrane region" description="Helical" evidence="3">
    <location>
        <begin position="413"/>
        <end position="433"/>
    </location>
</feature>
<feature type="transmembrane region" description="Helical" evidence="3">
    <location>
        <begin position="457"/>
        <end position="477"/>
    </location>
</feature>
<feature type="transmembrane region" description="Helical" evidence="3">
    <location>
        <begin position="488"/>
        <end position="508"/>
    </location>
</feature>
<feature type="transmembrane region" description="Helical" evidence="3">
    <location>
        <begin position="584"/>
        <end position="604"/>
    </location>
</feature>
<keyword id="KW-0249">Electron transport</keyword>
<keyword id="KW-0472">Membrane</keyword>
<keyword id="KW-0496">Mitochondrion</keyword>
<keyword id="KW-0999">Mitochondrion inner membrane</keyword>
<keyword id="KW-0520">NAD</keyword>
<keyword id="KW-1185">Reference proteome</keyword>
<keyword id="KW-0679">Respiratory chain</keyword>
<keyword id="KW-1278">Translocase</keyword>
<keyword id="KW-0812">Transmembrane</keyword>
<keyword id="KW-1133">Transmembrane helix</keyword>
<keyword id="KW-0813">Transport</keyword>
<keyword id="KW-0830">Ubiquinone</keyword>
<geneLocation type="mitochondrion"/>
<organism>
    <name type="scientific">Equus asinus</name>
    <name type="common">Donkey</name>
    <name type="synonym">Equus africanus asinus</name>
    <dbReference type="NCBI Taxonomy" id="9793"/>
    <lineage>
        <taxon>Eukaryota</taxon>
        <taxon>Metazoa</taxon>
        <taxon>Chordata</taxon>
        <taxon>Craniata</taxon>
        <taxon>Vertebrata</taxon>
        <taxon>Euteleostomi</taxon>
        <taxon>Mammalia</taxon>
        <taxon>Eutheria</taxon>
        <taxon>Laurasiatheria</taxon>
        <taxon>Perissodactyla</taxon>
        <taxon>Equidae</taxon>
        <taxon>Equus</taxon>
    </lineage>
</organism>
<comment type="function">
    <text evidence="1">Core subunit of the mitochondrial membrane respiratory chain NADH dehydrogenase (Complex I) which catalyzes electron transfer from NADH through the respiratory chain, using ubiquinone as an electron acceptor. Essential for the catalytic activity and assembly of complex I.</text>
</comment>
<comment type="catalytic activity">
    <reaction evidence="1">
        <text>a ubiquinone + NADH + 5 H(+)(in) = a ubiquinol + NAD(+) + 4 H(+)(out)</text>
        <dbReference type="Rhea" id="RHEA:29091"/>
        <dbReference type="Rhea" id="RHEA-COMP:9565"/>
        <dbReference type="Rhea" id="RHEA-COMP:9566"/>
        <dbReference type="ChEBI" id="CHEBI:15378"/>
        <dbReference type="ChEBI" id="CHEBI:16389"/>
        <dbReference type="ChEBI" id="CHEBI:17976"/>
        <dbReference type="ChEBI" id="CHEBI:57540"/>
        <dbReference type="ChEBI" id="CHEBI:57945"/>
        <dbReference type="EC" id="7.1.1.2"/>
    </reaction>
</comment>
<comment type="subunit">
    <text evidence="2">Core subunit of respiratory chain NADH dehydrogenase (Complex I) which is composed of 45 different subunits.</text>
</comment>
<comment type="subcellular location">
    <subcellularLocation>
        <location evidence="2">Mitochondrion inner membrane</location>
        <topology evidence="3">Multi-pass membrane protein</topology>
    </subcellularLocation>
</comment>
<comment type="similarity">
    <text evidence="4">Belongs to the complex I subunit 5 family.</text>
</comment>
<proteinExistence type="inferred from homology"/>